<evidence type="ECO:0000305" key="1"/>
<comment type="similarity">
    <text evidence="1">Belongs to the MtxX family.</text>
</comment>
<protein>
    <recommendedName>
        <fullName>Uncharacterized methyltransferase MTH_231</fullName>
        <ecNumber>2.1.1.-</ecNumber>
    </recommendedName>
</protein>
<name>Y231_METTH</name>
<gene>
    <name type="ordered locus">MTH_231</name>
</gene>
<proteinExistence type="inferred from homology"/>
<dbReference type="EC" id="2.1.1.-"/>
<dbReference type="EMBL" id="AE000666">
    <property type="protein sequence ID" value="AAB84737.1"/>
    <property type="molecule type" value="Genomic_DNA"/>
</dbReference>
<dbReference type="PIR" id="G69128">
    <property type="entry name" value="G69128"/>
</dbReference>
<dbReference type="SMR" id="O26333"/>
<dbReference type="FunCoup" id="O26333">
    <property type="interactions" value="1"/>
</dbReference>
<dbReference type="STRING" id="187420.MTH_231"/>
<dbReference type="PaxDb" id="187420-MTH_231"/>
<dbReference type="EnsemblBacteria" id="AAB84737">
    <property type="protein sequence ID" value="AAB84737"/>
    <property type="gene ID" value="MTH_231"/>
</dbReference>
<dbReference type="KEGG" id="mth:MTH_231"/>
<dbReference type="PATRIC" id="fig|187420.15.peg.200"/>
<dbReference type="HOGENOM" id="CLU_086562_0_0_2"/>
<dbReference type="InParanoid" id="O26333"/>
<dbReference type="Proteomes" id="UP000005223">
    <property type="component" value="Chromosome"/>
</dbReference>
<dbReference type="GO" id="GO:0008168">
    <property type="term" value="F:methyltransferase activity"/>
    <property type="evidence" value="ECO:0007669"/>
    <property type="project" value="UniProtKB-KW"/>
</dbReference>
<dbReference type="GO" id="GO:0032259">
    <property type="term" value="P:methylation"/>
    <property type="evidence" value="ECO:0007669"/>
    <property type="project" value="UniProtKB-KW"/>
</dbReference>
<dbReference type="Gene3D" id="3.40.718.10">
    <property type="entry name" value="Isopropylmalate Dehydrogenase"/>
    <property type="match status" value="1"/>
</dbReference>
<dbReference type="InterPro" id="IPR016764">
    <property type="entry name" value="MeTrfase_MtxX_xsu"/>
</dbReference>
<dbReference type="NCBIfam" id="TIGR03270">
    <property type="entry name" value="methan_mark_4"/>
    <property type="match status" value="1"/>
</dbReference>
<dbReference type="PIRSF" id="PIRSF019709">
    <property type="entry name" value="Methyltransf_MtxX"/>
    <property type="match status" value="1"/>
</dbReference>
<dbReference type="SUPFAM" id="SSF53659">
    <property type="entry name" value="Isocitrate/Isopropylmalate dehydrogenase-like"/>
    <property type="match status" value="1"/>
</dbReference>
<keyword id="KW-0489">Methyltransferase</keyword>
<keyword id="KW-1185">Reference proteome</keyword>
<keyword id="KW-0808">Transferase</keyword>
<organism>
    <name type="scientific">Methanothermobacter thermautotrophicus (strain ATCC 29096 / DSM 1053 / JCM 10044 / NBRC 100330 / Delta H)</name>
    <name type="common">Methanobacterium thermoautotrophicum</name>
    <dbReference type="NCBI Taxonomy" id="187420"/>
    <lineage>
        <taxon>Archaea</taxon>
        <taxon>Methanobacteriati</taxon>
        <taxon>Methanobacteriota</taxon>
        <taxon>Methanomada group</taxon>
        <taxon>Methanobacteria</taxon>
        <taxon>Methanobacteriales</taxon>
        <taxon>Methanobacteriaceae</taxon>
        <taxon>Methanothermobacter</taxon>
    </lineage>
</organism>
<feature type="chain" id="PRO_0000135935" description="Uncharacterized methyltransferase MTH_231">
    <location>
        <begin position="1"/>
        <end position="242"/>
    </location>
</feature>
<reference key="1">
    <citation type="journal article" date="1997" name="J. Bacteriol.">
        <title>Complete genome sequence of Methanobacterium thermoautotrophicum deltaH: functional analysis and comparative genomics.</title>
        <authorList>
            <person name="Smith D.R."/>
            <person name="Doucette-Stamm L.A."/>
            <person name="Deloughery C."/>
            <person name="Lee H.-M."/>
            <person name="Dubois J."/>
            <person name="Aldredge T."/>
            <person name="Bashirzadeh R."/>
            <person name="Blakely D."/>
            <person name="Cook R."/>
            <person name="Gilbert K."/>
            <person name="Harrison D."/>
            <person name="Hoang L."/>
            <person name="Keagle P."/>
            <person name="Lumm W."/>
            <person name="Pothier B."/>
            <person name="Qiu D."/>
            <person name="Spadafora R."/>
            <person name="Vicare R."/>
            <person name="Wang Y."/>
            <person name="Wierzbowski J."/>
            <person name="Gibson R."/>
            <person name="Jiwani N."/>
            <person name="Caruso A."/>
            <person name="Bush D."/>
            <person name="Safer H."/>
            <person name="Patwell D."/>
            <person name="Prabhakar S."/>
            <person name="McDougall S."/>
            <person name="Shimer G."/>
            <person name="Goyal A."/>
            <person name="Pietrovski S."/>
            <person name="Church G.M."/>
            <person name="Daniels C.J."/>
            <person name="Mao J.-I."/>
            <person name="Rice P."/>
            <person name="Noelling J."/>
            <person name="Reeve J.N."/>
        </authorList>
    </citation>
    <scope>NUCLEOTIDE SEQUENCE [LARGE SCALE GENOMIC DNA]</scope>
    <source>
        <strain>ATCC 29096 / DSM 1053 / JCM 10044 / NBRC 100330 / Delta H</strain>
    </source>
</reference>
<sequence length="242" mass="26370">MYGSEGGAMRIVAGVGENRNMERAASLADFEVDLVHSEEEFIEELRRGAAAYVRGSLPAANIMAELKKGGPLNRASWIEVGANGFLLAPVGIDEGRTVDDRFKIAVSASEFLRKTGEEPRVGVISGGRRGDLGRSPEVDRSIHEGEFLTSMIKDKYRVRHYHILIEEAVADGCNVIIAPDGITGNLIFRSLVLVGTARSYGAVALGFDGIFVDTSRSQTAEGYLRALKFAHWLARGWNEDNE</sequence>
<accession>O26333</accession>